<keyword id="KW-0251">Elongation factor</keyword>
<keyword id="KW-0342">GTP-binding</keyword>
<keyword id="KW-0496">Mitochondrion</keyword>
<keyword id="KW-0547">Nucleotide-binding</keyword>
<keyword id="KW-0648">Protein biosynthesis</keyword>
<dbReference type="EMBL" id="CH954177">
    <property type="protein sequence ID" value="EDV59192.1"/>
    <property type="molecule type" value="Genomic_DNA"/>
</dbReference>
<dbReference type="SMR" id="B3N6A5"/>
<dbReference type="EnsemblMetazoa" id="FBtr0143598">
    <property type="protein sequence ID" value="FBpp0142090"/>
    <property type="gene ID" value="FBgn0115690"/>
</dbReference>
<dbReference type="EnsemblMetazoa" id="XM_001970097.3">
    <property type="protein sequence ID" value="XP_001970133.1"/>
    <property type="gene ID" value="LOC6542663"/>
</dbReference>
<dbReference type="GeneID" id="6542663"/>
<dbReference type="KEGG" id="der:6542663"/>
<dbReference type="CTD" id="34004"/>
<dbReference type="eggNOG" id="KOG0465">
    <property type="taxonomic scope" value="Eukaryota"/>
</dbReference>
<dbReference type="HOGENOM" id="CLU_002794_4_0_1"/>
<dbReference type="OMA" id="GQFAKVQ"/>
<dbReference type="OrthoDB" id="198619at2759"/>
<dbReference type="PhylomeDB" id="B3N6A5"/>
<dbReference type="UniPathway" id="UPA00345"/>
<dbReference type="Proteomes" id="UP000008711">
    <property type="component" value="Unassembled WGS sequence"/>
</dbReference>
<dbReference type="GO" id="GO:0005739">
    <property type="term" value="C:mitochondrion"/>
    <property type="evidence" value="ECO:0007669"/>
    <property type="project" value="UniProtKB-SubCell"/>
</dbReference>
<dbReference type="GO" id="GO:0005634">
    <property type="term" value="C:nucleus"/>
    <property type="evidence" value="ECO:0007669"/>
    <property type="project" value="EnsemblMetazoa"/>
</dbReference>
<dbReference type="GO" id="GO:0005525">
    <property type="term" value="F:GTP binding"/>
    <property type="evidence" value="ECO:0007669"/>
    <property type="project" value="UniProtKB-UniRule"/>
</dbReference>
<dbReference type="GO" id="GO:0003924">
    <property type="term" value="F:GTPase activity"/>
    <property type="evidence" value="ECO:0000250"/>
    <property type="project" value="UniProtKB"/>
</dbReference>
<dbReference type="GO" id="GO:0003746">
    <property type="term" value="F:translation elongation factor activity"/>
    <property type="evidence" value="ECO:0000250"/>
    <property type="project" value="UniProtKB"/>
</dbReference>
<dbReference type="GO" id="GO:0070125">
    <property type="term" value="P:mitochondrial translational elongation"/>
    <property type="evidence" value="ECO:0000250"/>
    <property type="project" value="UniProtKB"/>
</dbReference>
<dbReference type="CDD" id="cd01886">
    <property type="entry name" value="EF-G"/>
    <property type="match status" value="1"/>
</dbReference>
<dbReference type="CDD" id="cd16262">
    <property type="entry name" value="EFG_III"/>
    <property type="match status" value="1"/>
</dbReference>
<dbReference type="CDD" id="cd01434">
    <property type="entry name" value="EFG_mtEFG1_IV"/>
    <property type="match status" value="1"/>
</dbReference>
<dbReference type="CDD" id="cd04097">
    <property type="entry name" value="mtEFG1_C"/>
    <property type="match status" value="1"/>
</dbReference>
<dbReference type="CDD" id="cd04091">
    <property type="entry name" value="mtEFG1_II_like"/>
    <property type="match status" value="1"/>
</dbReference>
<dbReference type="FunFam" id="3.30.230.10:FF:000003">
    <property type="entry name" value="Elongation factor G"/>
    <property type="match status" value="1"/>
</dbReference>
<dbReference type="FunFam" id="3.30.70.240:FF:000001">
    <property type="entry name" value="Elongation factor G"/>
    <property type="match status" value="1"/>
</dbReference>
<dbReference type="FunFam" id="3.30.70.870:FF:000001">
    <property type="entry name" value="Elongation factor G"/>
    <property type="match status" value="1"/>
</dbReference>
<dbReference type="FunFam" id="2.40.30.10:FF:000022">
    <property type="entry name" value="Elongation factor G, mitochondrial"/>
    <property type="match status" value="1"/>
</dbReference>
<dbReference type="FunFam" id="3.40.50.300:FF:000539">
    <property type="entry name" value="Elongation factor G, mitochondrial"/>
    <property type="match status" value="1"/>
</dbReference>
<dbReference type="Gene3D" id="3.30.230.10">
    <property type="match status" value="1"/>
</dbReference>
<dbReference type="Gene3D" id="3.30.70.240">
    <property type="match status" value="1"/>
</dbReference>
<dbReference type="Gene3D" id="3.30.70.870">
    <property type="entry name" value="Elongation Factor G (Translational Gtpase), domain 3"/>
    <property type="match status" value="1"/>
</dbReference>
<dbReference type="Gene3D" id="3.40.50.300">
    <property type="entry name" value="P-loop containing nucleotide triphosphate hydrolases"/>
    <property type="match status" value="1"/>
</dbReference>
<dbReference type="Gene3D" id="2.40.30.10">
    <property type="entry name" value="Translation factors"/>
    <property type="match status" value="1"/>
</dbReference>
<dbReference type="HAMAP" id="MF_00054_B">
    <property type="entry name" value="EF_G_EF_2_B"/>
    <property type="match status" value="1"/>
</dbReference>
<dbReference type="InterPro" id="IPR041095">
    <property type="entry name" value="EFG_II"/>
</dbReference>
<dbReference type="InterPro" id="IPR009022">
    <property type="entry name" value="EFG_III"/>
</dbReference>
<dbReference type="InterPro" id="IPR035647">
    <property type="entry name" value="EFG_III/V"/>
</dbReference>
<dbReference type="InterPro" id="IPR047872">
    <property type="entry name" value="EFG_IV"/>
</dbReference>
<dbReference type="InterPro" id="IPR035649">
    <property type="entry name" value="EFG_V"/>
</dbReference>
<dbReference type="InterPro" id="IPR000640">
    <property type="entry name" value="EFG_V-like"/>
</dbReference>
<dbReference type="InterPro" id="IPR004161">
    <property type="entry name" value="EFTu-like_2"/>
</dbReference>
<dbReference type="InterPro" id="IPR031157">
    <property type="entry name" value="G_TR_CS"/>
</dbReference>
<dbReference type="InterPro" id="IPR027417">
    <property type="entry name" value="P-loop_NTPase"/>
</dbReference>
<dbReference type="InterPro" id="IPR020568">
    <property type="entry name" value="Ribosomal_Su5_D2-typ_SF"/>
</dbReference>
<dbReference type="InterPro" id="IPR014721">
    <property type="entry name" value="Ribsml_uS5_D2-typ_fold_subgr"/>
</dbReference>
<dbReference type="InterPro" id="IPR005225">
    <property type="entry name" value="Small_GTP-bd"/>
</dbReference>
<dbReference type="InterPro" id="IPR000795">
    <property type="entry name" value="T_Tr_GTP-bd_dom"/>
</dbReference>
<dbReference type="InterPro" id="IPR009000">
    <property type="entry name" value="Transl_B-barrel_sf"/>
</dbReference>
<dbReference type="InterPro" id="IPR004540">
    <property type="entry name" value="Transl_elong_EFG/EF2"/>
</dbReference>
<dbReference type="InterPro" id="IPR005517">
    <property type="entry name" value="Transl_elong_EFG/EF2_IV"/>
</dbReference>
<dbReference type="NCBIfam" id="TIGR00484">
    <property type="entry name" value="EF-G"/>
    <property type="match status" value="1"/>
</dbReference>
<dbReference type="NCBIfam" id="NF009381">
    <property type="entry name" value="PRK12740.1-5"/>
    <property type="match status" value="1"/>
</dbReference>
<dbReference type="NCBIfam" id="TIGR00231">
    <property type="entry name" value="small_GTP"/>
    <property type="match status" value="1"/>
</dbReference>
<dbReference type="PANTHER" id="PTHR43636">
    <property type="entry name" value="ELONGATION FACTOR G, MITOCHONDRIAL"/>
    <property type="match status" value="1"/>
</dbReference>
<dbReference type="PANTHER" id="PTHR43636:SF2">
    <property type="entry name" value="ELONGATION FACTOR G, MITOCHONDRIAL"/>
    <property type="match status" value="1"/>
</dbReference>
<dbReference type="Pfam" id="PF00679">
    <property type="entry name" value="EFG_C"/>
    <property type="match status" value="1"/>
</dbReference>
<dbReference type="Pfam" id="PF14492">
    <property type="entry name" value="EFG_III"/>
    <property type="match status" value="1"/>
</dbReference>
<dbReference type="Pfam" id="PF03764">
    <property type="entry name" value="EFG_IV"/>
    <property type="match status" value="1"/>
</dbReference>
<dbReference type="Pfam" id="PF00009">
    <property type="entry name" value="GTP_EFTU"/>
    <property type="match status" value="1"/>
</dbReference>
<dbReference type="Pfam" id="PF03144">
    <property type="entry name" value="GTP_EFTU_D2"/>
    <property type="match status" value="1"/>
</dbReference>
<dbReference type="PRINTS" id="PR00315">
    <property type="entry name" value="ELONGATNFCT"/>
</dbReference>
<dbReference type="SMART" id="SM00838">
    <property type="entry name" value="EFG_C"/>
    <property type="match status" value="1"/>
</dbReference>
<dbReference type="SMART" id="SM00889">
    <property type="entry name" value="EFG_IV"/>
    <property type="match status" value="1"/>
</dbReference>
<dbReference type="SUPFAM" id="SSF54980">
    <property type="entry name" value="EF-G C-terminal domain-like"/>
    <property type="match status" value="2"/>
</dbReference>
<dbReference type="SUPFAM" id="SSF52540">
    <property type="entry name" value="P-loop containing nucleoside triphosphate hydrolases"/>
    <property type="match status" value="1"/>
</dbReference>
<dbReference type="SUPFAM" id="SSF54211">
    <property type="entry name" value="Ribosomal protein S5 domain 2-like"/>
    <property type="match status" value="1"/>
</dbReference>
<dbReference type="SUPFAM" id="SSF50447">
    <property type="entry name" value="Translation proteins"/>
    <property type="match status" value="1"/>
</dbReference>
<dbReference type="PROSITE" id="PS00301">
    <property type="entry name" value="G_TR_1"/>
    <property type="match status" value="1"/>
</dbReference>
<dbReference type="PROSITE" id="PS51722">
    <property type="entry name" value="G_TR_2"/>
    <property type="match status" value="1"/>
</dbReference>
<protein>
    <recommendedName>
        <fullName evidence="2">Elongation factor G, mitochondrial</fullName>
        <shortName evidence="2">EF-Gmt</shortName>
    </recommendedName>
    <alternativeName>
        <fullName evidence="2">Elongation factor G 1, mitochondrial</fullName>
        <shortName evidence="2">mEF-G 1</shortName>
    </alternativeName>
    <alternativeName>
        <fullName evidence="2">Elongation factor G1</fullName>
    </alternativeName>
</protein>
<sequence length="745" mass="83561">MSLITRLLTGNNHLRIRALESLGKAGYSSHAKFSEHKPIERIRNIGISAHIDSGKTTLTERILFYTGRIAEMHEVRGKDNVGATMDSMELERQRGITIQSAATYTLWKDTNINIIDTPGHVDFTVEVERALRVLDGAVLVLCAVGGVQSQTLTVNRQMKRYNVPCLAFINKLDRLGSNPYRVLSQMRSKMNHNAAFIQLPIGVESNCKGIVDLVREKAIYFEGEHGMDIRLDEIPQDMRVESLERRQELIEHLSNADETLGELFLEEKPFTEDDIKAALRRTCINRTFTPVLVGTALKNKGVQPLLDAVLDYLPNPGEVENLGFIEKEGQDPEKIVLNPARDGKDPFVGLAFKLEAGRFGQLTYLRCYQGVLRKGDNIFNARTNKKVRIARLVRLHSNQMEDVNEVYAGDIFALFGVDCASGDTFTTNPKNNLSMESIFVPEPVVSMAIKPNNTKDRDNFSKAIARFTKEDPTFHFFFDNDVKETLVSGMGELHLEIYAQRMEREYGCPVTLGKPKVAFRETLVGPCEFDYLHKKQSGGSGQYARIIGIMEPLPPTQNTLLEFVDETVGTNVPKQFVPGVEKGYREMAEKGMLSGHKLSGIRFRLQDGGHHIVDSSELAFMLAAHGAIKEVFQNGSWQILEPIMLVEVTAPEEFQGAVMGHLSKRHGIITGTEGTEGWFTVYAEVPLNDMFGYAGELRSSTQGKGEFTMEYSRYSPCLPDVQDQIVRQYQESQGLAQPDKKKKKN</sequence>
<comment type="function">
    <text evidence="2">Mitochondrial GTPase that catalyzes the GTP-dependent ribosomal translocation step during translation elongation. During this step, the ribosome changes from the pre-translocational (PRE) to the post-translocational (POST) state as the newly formed A-site-bound peptidyl-tRNA and P-site-bound deacylated tRNA move to the P and E sites, respectively. Catalyzes the coordinated movement of the two tRNA molecules, the mRNA and conformational changes in the ribosome. Essential during development as it acts as a retrograde signal from mitochondria to the nucleus to slow down cell proliferation if mitochondrial energy output is low (By similarity).</text>
</comment>
<comment type="pathway">
    <text evidence="2">Protein biosynthesis; polypeptide chain elongation.</text>
</comment>
<comment type="subcellular location">
    <subcellularLocation>
        <location evidence="2">Mitochondrion</location>
    </subcellularLocation>
</comment>
<comment type="miscellaneous">
    <text evidence="2">This protein may be expected to contain an N-terminal transit peptide but none has been predicted.</text>
</comment>
<comment type="similarity">
    <text evidence="3">Belongs to the TRAFAC class translation factor GTPase superfamily. Classic translation factor GTPase family. EF-G/EF-2 subfamily.</text>
</comment>
<evidence type="ECO:0000250" key="1">
    <source>
        <dbReference type="UniProtKB" id="Q9VM33"/>
    </source>
</evidence>
<evidence type="ECO:0000255" key="2">
    <source>
        <dbReference type="HAMAP-Rule" id="MF_03061"/>
    </source>
</evidence>
<evidence type="ECO:0000305" key="3"/>
<proteinExistence type="inferred from homology"/>
<reference key="1">
    <citation type="journal article" date="2007" name="Nature">
        <title>Evolution of genes and genomes on the Drosophila phylogeny.</title>
        <authorList>
            <consortium name="Drosophila 12 genomes consortium"/>
        </authorList>
    </citation>
    <scope>NUCLEOTIDE SEQUENCE [LARGE SCALE GENOMIC DNA]</scope>
    <source>
        <strain>Tucson 14021-0224.01</strain>
    </source>
</reference>
<feature type="chain" id="PRO_0000385546" description="Elongation factor G, mitochondrial">
    <location>
        <begin position="1"/>
        <end position="745"/>
    </location>
</feature>
<feature type="domain" description="tr-type G">
    <location>
        <begin position="40"/>
        <end position="317"/>
    </location>
</feature>
<feature type="binding site" evidence="2">
    <location>
        <begin position="49"/>
        <end position="56"/>
    </location>
    <ligand>
        <name>GTP</name>
        <dbReference type="ChEBI" id="CHEBI:37565"/>
    </ligand>
</feature>
<feature type="binding site" evidence="2">
    <location>
        <begin position="116"/>
        <end position="120"/>
    </location>
    <ligand>
        <name>GTP</name>
        <dbReference type="ChEBI" id="CHEBI:37565"/>
    </ligand>
</feature>
<feature type="binding site" evidence="2">
    <location>
        <begin position="170"/>
        <end position="173"/>
    </location>
    <ligand>
        <name>GTP</name>
        <dbReference type="ChEBI" id="CHEBI:37565"/>
    </ligand>
</feature>
<accession>B3N6A5</accession>
<gene>
    <name evidence="1" type="primary">mEFG1</name>
    <name evidence="1" type="synonym">ico</name>
    <name type="ORF">GG23544</name>
</gene>
<organism>
    <name type="scientific">Drosophila erecta</name>
    <name type="common">Fruit fly</name>
    <dbReference type="NCBI Taxonomy" id="7220"/>
    <lineage>
        <taxon>Eukaryota</taxon>
        <taxon>Metazoa</taxon>
        <taxon>Ecdysozoa</taxon>
        <taxon>Arthropoda</taxon>
        <taxon>Hexapoda</taxon>
        <taxon>Insecta</taxon>
        <taxon>Pterygota</taxon>
        <taxon>Neoptera</taxon>
        <taxon>Endopterygota</taxon>
        <taxon>Diptera</taxon>
        <taxon>Brachycera</taxon>
        <taxon>Muscomorpha</taxon>
        <taxon>Ephydroidea</taxon>
        <taxon>Drosophilidae</taxon>
        <taxon>Drosophila</taxon>
        <taxon>Sophophora</taxon>
    </lineage>
</organism>
<name>EFGM_DROER</name>